<comment type="function">
    <text evidence="1">RNaseP catalyzes the removal of the 5'-leader sequence from pre-tRNA to produce the mature 5'-terminus. It can also cleave other RNA substrates such as 4.5S RNA. The protein component plays an auxiliary but essential role in vivo by binding to the 5'-leader sequence and broadening the substrate specificity of the ribozyme.</text>
</comment>
<comment type="catalytic activity">
    <reaction evidence="1">
        <text>Endonucleolytic cleavage of RNA, removing 5'-extranucleotides from tRNA precursor.</text>
        <dbReference type="EC" id="3.1.26.5"/>
    </reaction>
</comment>
<comment type="subunit">
    <text evidence="1">Consists of a catalytic RNA component (M1 or rnpB) and a protein subunit.</text>
</comment>
<comment type="similarity">
    <text evidence="1">Belongs to the RnpA family.</text>
</comment>
<reference key="1">
    <citation type="submission" date="2004-06" db="EMBL/GenBank/DDBJ databases">
        <authorList>
            <person name="Birren B.W."/>
            <person name="Stange-Thomann N."/>
            <person name="Hafez N."/>
            <person name="DeCaprio D."/>
            <person name="Fisher S."/>
            <person name="Butler J."/>
            <person name="Elkins T."/>
            <person name="Kodira C.D."/>
            <person name="Major J."/>
            <person name="Wang S."/>
            <person name="Nicol R."/>
            <person name="Nusbaum C."/>
        </authorList>
    </citation>
    <scope>NUCLEOTIDE SEQUENCE [LARGE SCALE GENOMIC DNA]</scope>
    <source>
        <strain>ATCC 33453 / NBRC 100688 / NCTC 11704 / L1</strain>
    </source>
</reference>
<organism>
    <name type="scientific">Mesoplasma florum (strain ATCC 33453 / NBRC 100688 / NCTC 11704 / L1)</name>
    <name type="common">Acholeplasma florum</name>
    <dbReference type="NCBI Taxonomy" id="265311"/>
    <lineage>
        <taxon>Bacteria</taxon>
        <taxon>Bacillati</taxon>
        <taxon>Mycoplasmatota</taxon>
        <taxon>Mollicutes</taxon>
        <taxon>Entomoplasmatales</taxon>
        <taxon>Entomoplasmataceae</taxon>
        <taxon>Mesoplasma</taxon>
    </lineage>
</organism>
<feature type="chain" id="PRO_0000198482" description="Ribonuclease P protein component">
    <location>
        <begin position="1"/>
        <end position="110"/>
    </location>
</feature>
<accession>Q6F0D5</accession>
<dbReference type="EC" id="3.1.26.5" evidence="1"/>
<dbReference type="EMBL" id="AE017263">
    <property type="protein sequence ID" value="AAT76038.1"/>
    <property type="molecule type" value="Genomic_DNA"/>
</dbReference>
<dbReference type="RefSeq" id="WP_011183578.1">
    <property type="nucleotide sequence ID" value="NC_006055.1"/>
</dbReference>
<dbReference type="RefSeq" id="YP_053922.1">
    <property type="nucleotide sequence ID" value="NC_006055.1"/>
</dbReference>
<dbReference type="SMR" id="Q6F0D5"/>
<dbReference type="STRING" id="265311.Mfl682"/>
<dbReference type="PaxDb" id="265311-Mfl682"/>
<dbReference type="EnsemblBacteria" id="AAT76038">
    <property type="protein sequence ID" value="AAT76038"/>
    <property type="gene ID" value="Mfl682"/>
</dbReference>
<dbReference type="GeneID" id="2897775"/>
<dbReference type="KEGG" id="mfl:Mfl682"/>
<dbReference type="PATRIC" id="fig|265311.5.peg.684"/>
<dbReference type="eggNOG" id="COG0594">
    <property type="taxonomic scope" value="Bacteria"/>
</dbReference>
<dbReference type="HOGENOM" id="CLU_117179_9_1_14"/>
<dbReference type="OrthoDB" id="9810867at2"/>
<dbReference type="Proteomes" id="UP000006647">
    <property type="component" value="Chromosome"/>
</dbReference>
<dbReference type="GO" id="GO:0030677">
    <property type="term" value="C:ribonuclease P complex"/>
    <property type="evidence" value="ECO:0007669"/>
    <property type="project" value="TreeGrafter"/>
</dbReference>
<dbReference type="GO" id="GO:0042781">
    <property type="term" value="F:3'-tRNA processing endoribonuclease activity"/>
    <property type="evidence" value="ECO:0007669"/>
    <property type="project" value="TreeGrafter"/>
</dbReference>
<dbReference type="GO" id="GO:0004526">
    <property type="term" value="F:ribonuclease P activity"/>
    <property type="evidence" value="ECO:0007669"/>
    <property type="project" value="UniProtKB-UniRule"/>
</dbReference>
<dbReference type="GO" id="GO:0000049">
    <property type="term" value="F:tRNA binding"/>
    <property type="evidence" value="ECO:0007669"/>
    <property type="project" value="UniProtKB-UniRule"/>
</dbReference>
<dbReference type="GO" id="GO:0001682">
    <property type="term" value="P:tRNA 5'-leader removal"/>
    <property type="evidence" value="ECO:0007669"/>
    <property type="project" value="UniProtKB-UniRule"/>
</dbReference>
<dbReference type="Gene3D" id="3.30.230.10">
    <property type="match status" value="1"/>
</dbReference>
<dbReference type="HAMAP" id="MF_00227">
    <property type="entry name" value="RNase_P"/>
    <property type="match status" value="1"/>
</dbReference>
<dbReference type="InterPro" id="IPR020568">
    <property type="entry name" value="Ribosomal_Su5_D2-typ_SF"/>
</dbReference>
<dbReference type="InterPro" id="IPR014721">
    <property type="entry name" value="Ribsml_uS5_D2-typ_fold_subgr"/>
</dbReference>
<dbReference type="InterPro" id="IPR000100">
    <property type="entry name" value="RNase_P"/>
</dbReference>
<dbReference type="InterPro" id="IPR020539">
    <property type="entry name" value="RNase_P_CS"/>
</dbReference>
<dbReference type="NCBIfam" id="TIGR00188">
    <property type="entry name" value="rnpA"/>
    <property type="match status" value="1"/>
</dbReference>
<dbReference type="PANTHER" id="PTHR33992">
    <property type="entry name" value="RIBONUCLEASE P PROTEIN COMPONENT"/>
    <property type="match status" value="1"/>
</dbReference>
<dbReference type="PANTHER" id="PTHR33992:SF1">
    <property type="entry name" value="RIBONUCLEASE P PROTEIN COMPONENT"/>
    <property type="match status" value="1"/>
</dbReference>
<dbReference type="Pfam" id="PF00825">
    <property type="entry name" value="Ribonuclease_P"/>
    <property type="match status" value="1"/>
</dbReference>
<dbReference type="SUPFAM" id="SSF54211">
    <property type="entry name" value="Ribosomal protein S5 domain 2-like"/>
    <property type="match status" value="1"/>
</dbReference>
<dbReference type="PROSITE" id="PS00648">
    <property type="entry name" value="RIBONUCLEASE_P"/>
    <property type="match status" value="1"/>
</dbReference>
<gene>
    <name evidence="1" type="primary">rnpA</name>
    <name type="ordered locus">Mfl682</name>
</gene>
<keyword id="KW-0255">Endonuclease</keyword>
<keyword id="KW-0378">Hydrolase</keyword>
<keyword id="KW-0540">Nuclease</keyword>
<keyword id="KW-1185">Reference proteome</keyword>
<keyword id="KW-0694">RNA-binding</keyword>
<keyword id="KW-0819">tRNA processing</keyword>
<protein>
    <recommendedName>
        <fullName evidence="1">Ribonuclease P protein component</fullName>
        <shortName evidence="1">RNase P protein</shortName>
        <shortName evidence="1">RNaseP protein</shortName>
        <ecNumber evidence="1">3.1.26.5</ecNumber>
    </recommendedName>
    <alternativeName>
        <fullName evidence="1">Protein C5</fullName>
    </alternativeName>
</protein>
<sequence length="110" mass="13284">MKNKKIIKKNFEFQEIISKQEFHRNSAFVIYYSKNDKGYFRYGISVGKKLGNAVTRNKIKRQIRMMIQDQIKILPEFSYDIVIIARNRMMQNSFDQNQKELNKLVVRFLK</sequence>
<proteinExistence type="inferred from homology"/>
<name>RNPA_MESFL</name>
<evidence type="ECO:0000255" key="1">
    <source>
        <dbReference type="HAMAP-Rule" id="MF_00227"/>
    </source>
</evidence>